<organism>
    <name type="scientific">Staphylococcus aureus (strain USA300 / TCH1516)</name>
    <dbReference type="NCBI Taxonomy" id="451516"/>
    <lineage>
        <taxon>Bacteria</taxon>
        <taxon>Bacillati</taxon>
        <taxon>Bacillota</taxon>
        <taxon>Bacilli</taxon>
        <taxon>Bacillales</taxon>
        <taxon>Staphylococcaceae</taxon>
        <taxon>Staphylococcus</taxon>
    </lineage>
</organism>
<accession>A8YZ65</accession>
<feature type="chain" id="PRO_1000083446" description="Phosphopentomutase">
    <location>
        <begin position="1"/>
        <end position="392"/>
    </location>
</feature>
<feature type="binding site" evidence="1">
    <location>
        <position position="14"/>
    </location>
    <ligand>
        <name>Mn(2+)</name>
        <dbReference type="ChEBI" id="CHEBI:29035"/>
        <label>1</label>
    </ligand>
</feature>
<feature type="binding site" evidence="1">
    <location>
        <position position="286"/>
    </location>
    <ligand>
        <name>Mn(2+)</name>
        <dbReference type="ChEBI" id="CHEBI:29035"/>
        <label>2</label>
    </ligand>
</feature>
<feature type="binding site" evidence="1">
    <location>
        <position position="291"/>
    </location>
    <ligand>
        <name>Mn(2+)</name>
        <dbReference type="ChEBI" id="CHEBI:29035"/>
        <label>2</label>
    </ligand>
</feature>
<feature type="binding site" evidence="1">
    <location>
        <position position="327"/>
    </location>
    <ligand>
        <name>Mn(2+)</name>
        <dbReference type="ChEBI" id="CHEBI:29035"/>
        <label>1</label>
    </ligand>
</feature>
<feature type="binding site" evidence="1">
    <location>
        <position position="328"/>
    </location>
    <ligand>
        <name>Mn(2+)</name>
        <dbReference type="ChEBI" id="CHEBI:29035"/>
        <label>1</label>
    </ligand>
</feature>
<feature type="binding site" evidence="1">
    <location>
        <position position="339"/>
    </location>
    <ligand>
        <name>Mn(2+)</name>
        <dbReference type="ChEBI" id="CHEBI:29035"/>
        <label>2</label>
    </ligand>
</feature>
<reference key="1">
    <citation type="journal article" date="2007" name="BMC Microbiol.">
        <title>Subtle genetic changes enhance virulence of methicillin resistant and sensitive Staphylococcus aureus.</title>
        <authorList>
            <person name="Highlander S.K."/>
            <person name="Hulten K.G."/>
            <person name="Qin X."/>
            <person name="Jiang H."/>
            <person name="Yerrapragada S."/>
            <person name="Mason E.O. Jr."/>
            <person name="Shang Y."/>
            <person name="Williams T.M."/>
            <person name="Fortunov R.M."/>
            <person name="Liu Y."/>
            <person name="Igboeli O."/>
            <person name="Petrosino J."/>
            <person name="Tirumalai M."/>
            <person name="Uzman A."/>
            <person name="Fox G.E."/>
            <person name="Cardenas A.M."/>
            <person name="Muzny D.M."/>
            <person name="Hemphill L."/>
            <person name="Ding Y."/>
            <person name="Dugan S."/>
            <person name="Blyth P.R."/>
            <person name="Buhay C.J."/>
            <person name="Dinh H.H."/>
            <person name="Hawes A.C."/>
            <person name="Holder M."/>
            <person name="Kovar C.L."/>
            <person name="Lee S.L."/>
            <person name="Liu W."/>
            <person name="Nazareth L.V."/>
            <person name="Wang Q."/>
            <person name="Zhou J."/>
            <person name="Kaplan S.L."/>
            <person name="Weinstock G.M."/>
        </authorList>
    </citation>
    <scope>NUCLEOTIDE SEQUENCE [LARGE SCALE GENOMIC DNA]</scope>
    <source>
        <strain>USA300 / TCH1516</strain>
    </source>
</reference>
<gene>
    <name evidence="1" type="primary">deoB</name>
    <name type="ordered locus">USA300HOU_0151</name>
</gene>
<proteinExistence type="inferred from homology"/>
<comment type="function">
    <text evidence="1">Isomerase that catalyzes the conversion of deoxy-ribose 1-phosphate (dRib-1-P) and ribose 1-phosphate (Rib-1-P) to deoxy-ribose 5-phosphate (dRib-5-P) and ribose 5-phosphate (Rib-5-P), respectively.</text>
</comment>
<comment type="catalytic activity">
    <reaction evidence="1">
        <text>2-deoxy-alpha-D-ribose 1-phosphate = 2-deoxy-D-ribose 5-phosphate</text>
        <dbReference type="Rhea" id="RHEA:27658"/>
        <dbReference type="ChEBI" id="CHEBI:57259"/>
        <dbReference type="ChEBI" id="CHEBI:62877"/>
        <dbReference type="EC" id="5.4.2.7"/>
    </reaction>
</comment>
<comment type="catalytic activity">
    <reaction evidence="1">
        <text>alpha-D-ribose 1-phosphate = D-ribose 5-phosphate</text>
        <dbReference type="Rhea" id="RHEA:18793"/>
        <dbReference type="ChEBI" id="CHEBI:57720"/>
        <dbReference type="ChEBI" id="CHEBI:78346"/>
        <dbReference type="EC" id="5.4.2.7"/>
    </reaction>
</comment>
<comment type="cofactor">
    <cofactor evidence="1">
        <name>Mn(2+)</name>
        <dbReference type="ChEBI" id="CHEBI:29035"/>
    </cofactor>
    <text evidence="1">Binds 2 manganese ions.</text>
</comment>
<comment type="pathway">
    <text evidence="1">Carbohydrate degradation; 2-deoxy-D-ribose 1-phosphate degradation; D-glyceraldehyde 3-phosphate and acetaldehyde from 2-deoxy-alpha-D-ribose 1-phosphate: step 1/2.</text>
</comment>
<comment type="subcellular location">
    <subcellularLocation>
        <location evidence="1">Cytoplasm</location>
    </subcellularLocation>
</comment>
<comment type="similarity">
    <text evidence="1">Belongs to the phosphopentomutase family.</text>
</comment>
<keyword id="KW-0963">Cytoplasm</keyword>
<keyword id="KW-0413">Isomerase</keyword>
<keyword id="KW-0464">Manganese</keyword>
<keyword id="KW-0479">Metal-binding</keyword>
<protein>
    <recommendedName>
        <fullName evidence="1">Phosphopentomutase</fullName>
        <ecNumber evidence="1">5.4.2.7</ecNumber>
    </recommendedName>
    <alternativeName>
        <fullName evidence="1">Phosphodeoxyribomutase</fullName>
    </alternativeName>
</protein>
<dbReference type="EC" id="5.4.2.7" evidence="1"/>
<dbReference type="EMBL" id="CP000730">
    <property type="protein sequence ID" value="ABX28188.1"/>
    <property type="molecule type" value="Genomic_DNA"/>
</dbReference>
<dbReference type="RefSeq" id="WP_000197806.1">
    <property type="nucleotide sequence ID" value="NC_010079.1"/>
</dbReference>
<dbReference type="SMR" id="A8YZ65"/>
<dbReference type="KEGG" id="sax:USA300HOU_0151"/>
<dbReference type="HOGENOM" id="CLU_053861_0_0_9"/>
<dbReference type="UniPathway" id="UPA00002">
    <property type="reaction ID" value="UER00467"/>
</dbReference>
<dbReference type="GO" id="GO:0005829">
    <property type="term" value="C:cytosol"/>
    <property type="evidence" value="ECO:0007669"/>
    <property type="project" value="TreeGrafter"/>
</dbReference>
<dbReference type="GO" id="GO:0000287">
    <property type="term" value="F:magnesium ion binding"/>
    <property type="evidence" value="ECO:0007669"/>
    <property type="project" value="InterPro"/>
</dbReference>
<dbReference type="GO" id="GO:0030145">
    <property type="term" value="F:manganese ion binding"/>
    <property type="evidence" value="ECO:0007669"/>
    <property type="project" value="UniProtKB-UniRule"/>
</dbReference>
<dbReference type="GO" id="GO:0008973">
    <property type="term" value="F:phosphopentomutase activity"/>
    <property type="evidence" value="ECO:0007669"/>
    <property type="project" value="UniProtKB-UniRule"/>
</dbReference>
<dbReference type="GO" id="GO:0006018">
    <property type="term" value="P:2-deoxyribose 1-phosphate catabolic process"/>
    <property type="evidence" value="ECO:0007669"/>
    <property type="project" value="UniProtKB-UniRule"/>
</dbReference>
<dbReference type="GO" id="GO:0006015">
    <property type="term" value="P:5-phosphoribose 1-diphosphate biosynthetic process"/>
    <property type="evidence" value="ECO:0007669"/>
    <property type="project" value="UniProtKB-UniPathway"/>
</dbReference>
<dbReference type="GO" id="GO:0043094">
    <property type="term" value="P:metabolic compound salvage"/>
    <property type="evidence" value="ECO:0007669"/>
    <property type="project" value="InterPro"/>
</dbReference>
<dbReference type="GO" id="GO:0009117">
    <property type="term" value="P:nucleotide metabolic process"/>
    <property type="evidence" value="ECO:0007669"/>
    <property type="project" value="InterPro"/>
</dbReference>
<dbReference type="CDD" id="cd16009">
    <property type="entry name" value="PPM"/>
    <property type="match status" value="1"/>
</dbReference>
<dbReference type="FunFam" id="3.30.70.1250:FF:000001">
    <property type="entry name" value="Phosphopentomutase"/>
    <property type="match status" value="1"/>
</dbReference>
<dbReference type="Gene3D" id="3.40.720.10">
    <property type="entry name" value="Alkaline Phosphatase, subunit A"/>
    <property type="match status" value="1"/>
</dbReference>
<dbReference type="Gene3D" id="3.30.70.1250">
    <property type="entry name" value="Phosphopentomutase"/>
    <property type="match status" value="1"/>
</dbReference>
<dbReference type="HAMAP" id="MF_00740">
    <property type="entry name" value="Phosphopentomut"/>
    <property type="match status" value="1"/>
</dbReference>
<dbReference type="InterPro" id="IPR017850">
    <property type="entry name" value="Alkaline_phosphatase_core_sf"/>
</dbReference>
<dbReference type="InterPro" id="IPR010045">
    <property type="entry name" value="DeoB"/>
</dbReference>
<dbReference type="InterPro" id="IPR006124">
    <property type="entry name" value="Metalloenzyme"/>
</dbReference>
<dbReference type="InterPro" id="IPR024052">
    <property type="entry name" value="Phosphopentomutase_DeoB_cap_sf"/>
</dbReference>
<dbReference type="NCBIfam" id="TIGR01696">
    <property type="entry name" value="deoB"/>
    <property type="match status" value="1"/>
</dbReference>
<dbReference type="NCBIfam" id="NF003766">
    <property type="entry name" value="PRK05362.1"/>
    <property type="match status" value="1"/>
</dbReference>
<dbReference type="PANTHER" id="PTHR21110">
    <property type="entry name" value="PHOSPHOPENTOMUTASE"/>
    <property type="match status" value="1"/>
</dbReference>
<dbReference type="PANTHER" id="PTHR21110:SF0">
    <property type="entry name" value="PHOSPHOPENTOMUTASE"/>
    <property type="match status" value="1"/>
</dbReference>
<dbReference type="Pfam" id="PF01676">
    <property type="entry name" value="Metalloenzyme"/>
    <property type="match status" value="1"/>
</dbReference>
<dbReference type="PIRSF" id="PIRSF001491">
    <property type="entry name" value="Ppentomutase"/>
    <property type="match status" value="1"/>
</dbReference>
<dbReference type="SUPFAM" id="SSF53649">
    <property type="entry name" value="Alkaline phosphatase-like"/>
    <property type="match status" value="1"/>
</dbReference>
<dbReference type="SUPFAM" id="SSF143856">
    <property type="entry name" value="DeoB insert domain-like"/>
    <property type="match status" value="1"/>
</dbReference>
<sequence length="392" mass="43796">MTRPFNRVHLIVMDSVGIGEAPDAADFKDEGSHTLRHTLEGFDQTLPNLEKLGLGNIDKLPVVNAVEQPEAYYTKLSEASVGKDTMTGHWEIMGLNIMQPFKVYPNGFPEELIQQIEEMTGRKVVANKPASGTQIIDEWGEHQMKTGDLIVYTSADPVLQIAAHEDIIPLEELYDICEKVRELTKDPKYLIGRIIARPYVGEPGNFTRTSNRHDYALKPFGKTVLDHLKDGGYDVIAIGKINDIYDGEGVTEAVRTKSNMDGMDQLMKIVKKDFTGISFLNLVDFDALYGHRRDKPGYAQAIKDFDDRLPELFSNLKEDDLVIITADHGNDPTAPGTDHTREYIPVIMYSPKFKGGHALESDTTFSSIGATIADNFNVTLPEFGKSYLKELK</sequence>
<name>DEOB_STAAT</name>
<evidence type="ECO:0000255" key="1">
    <source>
        <dbReference type="HAMAP-Rule" id="MF_00740"/>
    </source>
</evidence>